<gene>
    <name evidence="1" type="primary">ruvB</name>
    <name type="ordered locus">SBO_1177</name>
</gene>
<evidence type="ECO:0000255" key="1">
    <source>
        <dbReference type="HAMAP-Rule" id="MF_00016"/>
    </source>
</evidence>
<dbReference type="EC" id="3.6.4.-" evidence="1"/>
<dbReference type="EMBL" id="CP000036">
    <property type="protein sequence ID" value="ABB65812.1"/>
    <property type="molecule type" value="Genomic_DNA"/>
</dbReference>
<dbReference type="RefSeq" id="WP_000568519.1">
    <property type="nucleotide sequence ID" value="NC_007613.1"/>
</dbReference>
<dbReference type="SMR" id="Q322E6"/>
<dbReference type="GeneID" id="75202735"/>
<dbReference type="KEGG" id="sbo:SBO_1177"/>
<dbReference type="HOGENOM" id="CLU_055599_1_0_6"/>
<dbReference type="Proteomes" id="UP000007067">
    <property type="component" value="Chromosome"/>
</dbReference>
<dbReference type="GO" id="GO:0005737">
    <property type="term" value="C:cytoplasm"/>
    <property type="evidence" value="ECO:0007669"/>
    <property type="project" value="UniProtKB-SubCell"/>
</dbReference>
<dbReference type="GO" id="GO:0048476">
    <property type="term" value="C:Holliday junction resolvase complex"/>
    <property type="evidence" value="ECO:0007669"/>
    <property type="project" value="UniProtKB-UniRule"/>
</dbReference>
<dbReference type="GO" id="GO:0005524">
    <property type="term" value="F:ATP binding"/>
    <property type="evidence" value="ECO:0007669"/>
    <property type="project" value="UniProtKB-UniRule"/>
</dbReference>
<dbReference type="GO" id="GO:0016887">
    <property type="term" value="F:ATP hydrolysis activity"/>
    <property type="evidence" value="ECO:0007669"/>
    <property type="project" value="InterPro"/>
</dbReference>
<dbReference type="GO" id="GO:0000400">
    <property type="term" value="F:four-way junction DNA binding"/>
    <property type="evidence" value="ECO:0007669"/>
    <property type="project" value="UniProtKB-UniRule"/>
</dbReference>
<dbReference type="GO" id="GO:0009378">
    <property type="term" value="F:four-way junction helicase activity"/>
    <property type="evidence" value="ECO:0007669"/>
    <property type="project" value="InterPro"/>
</dbReference>
<dbReference type="GO" id="GO:0006310">
    <property type="term" value="P:DNA recombination"/>
    <property type="evidence" value="ECO:0007669"/>
    <property type="project" value="UniProtKB-UniRule"/>
</dbReference>
<dbReference type="GO" id="GO:0006281">
    <property type="term" value="P:DNA repair"/>
    <property type="evidence" value="ECO:0007669"/>
    <property type="project" value="UniProtKB-UniRule"/>
</dbReference>
<dbReference type="CDD" id="cd00009">
    <property type="entry name" value="AAA"/>
    <property type="match status" value="1"/>
</dbReference>
<dbReference type="FunFam" id="1.10.10.10:FF:000086">
    <property type="entry name" value="Holliday junction ATP-dependent DNA helicase RuvB"/>
    <property type="match status" value="1"/>
</dbReference>
<dbReference type="FunFam" id="1.10.8.60:FF:000023">
    <property type="entry name" value="Holliday junction ATP-dependent DNA helicase RuvB"/>
    <property type="match status" value="1"/>
</dbReference>
<dbReference type="FunFam" id="3.40.50.300:FF:000073">
    <property type="entry name" value="Holliday junction ATP-dependent DNA helicase RuvB"/>
    <property type="match status" value="1"/>
</dbReference>
<dbReference type="Gene3D" id="1.10.8.60">
    <property type="match status" value="1"/>
</dbReference>
<dbReference type="Gene3D" id="3.40.50.300">
    <property type="entry name" value="P-loop containing nucleotide triphosphate hydrolases"/>
    <property type="match status" value="1"/>
</dbReference>
<dbReference type="Gene3D" id="1.10.10.10">
    <property type="entry name" value="Winged helix-like DNA-binding domain superfamily/Winged helix DNA-binding domain"/>
    <property type="match status" value="1"/>
</dbReference>
<dbReference type="HAMAP" id="MF_00016">
    <property type="entry name" value="DNA_HJ_migration_RuvB"/>
    <property type="match status" value="1"/>
</dbReference>
<dbReference type="InterPro" id="IPR003593">
    <property type="entry name" value="AAA+_ATPase"/>
</dbReference>
<dbReference type="InterPro" id="IPR041445">
    <property type="entry name" value="AAA_lid_4"/>
</dbReference>
<dbReference type="InterPro" id="IPR004605">
    <property type="entry name" value="DNA_helicase_Holl-junc_RuvB"/>
</dbReference>
<dbReference type="InterPro" id="IPR027417">
    <property type="entry name" value="P-loop_NTPase"/>
</dbReference>
<dbReference type="InterPro" id="IPR008824">
    <property type="entry name" value="RuvB-like_N"/>
</dbReference>
<dbReference type="InterPro" id="IPR008823">
    <property type="entry name" value="RuvB_C"/>
</dbReference>
<dbReference type="InterPro" id="IPR036388">
    <property type="entry name" value="WH-like_DNA-bd_sf"/>
</dbReference>
<dbReference type="InterPro" id="IPR036390">
    <property type="entry name" value="WH_DNA-bd_sf"/>
</dbReference>
<dbReference type="NCBIfam" id="NF000868">
    <property type="entry name" value="PRK00080.1"/>
    <property type="match status" value="1"/>
</dbReference>
<dbReference type="NCBIfam" id="TIGR00635">
    <property type="entry name" value="ruvB"/>
    <property type="match status" value="1"/>
</dbReference>
<dbReference type="PANTHER" id="PTHR42848">
    <property type="match status" value="1"/>
</dbReference>
<dbReference type="PANTHER" id="PTHR42848:SF1">
    <property type="entry name" value="HOLLIDAY JUNCTION BRANCH MIGRATION COMPLEX SUBUNIT RUVB"/>
    <property type="match status" value="1"/>
</dbReference>
<dbReference type="Pfam" id="PF17864">
    <property type="entry name" value="AAA_lid_4"/>
    <property type="match status" value="1"/>
</dbReference>
<dbReference type="Pfam" id="PF05491">
    <property type="entry name" value="RuvB_C"/>
    <property type="match status" value="1"/>
</dbReference>
<dbReference type="Pfam" id="PF05496">
    <property type="entry name" value="RuvB_N"/>
    <property type="match status" value="1"/>
</dbReference>
<dbReference type="SMART" id="SM00382">
    <property type="entry name" value="AAA"/>
    <property type="match status" value="1"/>
</dbReference>
<dbReference type="SUPFAM" id="SSF52540">
    <property type="entry name" value="P-loop containing nucleoside triphosphate hydrolases"/>
    <property type="match status" value="1"/>
</dbReference>
<dbReference type="SUPFAM" id="SSF46785">
    <property type="entry name" value="Winged helix' DNA-binding domain"/>
    <property type="match status" value="1"/>
</dbReference>
<proteinExistence type="inferred from homology"/>
<reference key="1">
    <citation type="journal article" date="2005" name="Nucleic Acids Res.">
        <title>Genome dynamics and diversity of Shigella species, the etiologic agents of bacillary dysentery.</title>
        <authorList>
            <person name="Yang F."/>
            <person name="Yang J."/>
            <person name="Zhang X."/>
            <person name="Chen L."/>
            <person name="Jiang Y."/>
            <person name="Yan Y."/>
            <person name="Tang X."/>
            <person name="Wang J."/>
            <person name="Xiong Z."/>
            <person name="Dong J."/>
            <person name="Xue Y."/>
            <person name="Zhu Y."/>
            <person name="Xu X."/>
            <person name="Sun L."/>
            <person name="Chen S."/>
            <person name="Nie H."/>
            <person name="Peng J."/>
            <person name="Xu J."/>
            <person name="Wang Y."/>
            <person name="Yuan Z."/>
            <person name="Wen Y."/>
            <person name="Yao Z."/>
            <person name="Shen Y."/>
            <person name="Qiang B."/>
            <person name="Hou Y."/>
            <person name="Yu J."/>
            <person name="Jin Q."/>
        </authorList>
    </citation>
    <scope>NUCLEOTIDE SEQUENCE [LARGE SCALE GENOMIC DNA]</scope>
    <source>
        <strain>Sb227</strain>
    </source>
</reference>
<sequence length="336" mass="37174">MIEADRLISAGTTLPEDVADRAIRPKLLEEYVGQPQVRSQMEIFIKAAKLRGDALDHLLIFGPPGLGKTTLANIVANEMGVNLRTTSGPVLEKAGDLAAMLTNLEPHDVLFIDEIHRLSPVVEEVLYPAMEDYQLDIMIGEGPAARSIKIDLPPFTLIGATTRAGSLTSPLRDRFGIVQRLEFYQVPDLQYIVSRSARFMGLEMSDDGALEVARRARGTPRIANRLLRRVRDFAEVKHDGTISADIAAQALDMLNVDAEGFDYMDRKLLLAVIDKFFGGPVGLDNLAAAIGEERETIEDVLEPYLIQQGFLQRTPRGRMATTRAWNHFGITPPEMP</sequence>
<protein>
    <recommendedName>
        <fullName evidence="1">Holliday junction branch migration complex subunit RuvB</fullName>
        <ecNumber evidence="1">3.6.4.-</ecNumber>
    </recommendedName>
</protein>
<feature type="chain" id="PRO_0000235403" description="Holliday junction branch migration complex subunit RuvB">
    <location>
        <begin position="1"/>
        <end position="336"/>
    </location>
</feature>
<feature type="region of interest" description="Large ATPase domain (RuvB-L)" evidence="1">
    <location>
        <begin position="4"/>
        <end position="184"/>
    </location>
</feature>
<feature type="region of interest" description="Small ATPAse domain (RuvB-S)" evidence="1">
    <location>
        <begin position="185"/>
        <end position="255"/>
    </location>
</feature>
<feature type="region of interest" description="Head domain (RuvB-H)" evidence="1">
    <location>
        <begin position="258"/>
        <end position="336"/>
    </location>
</feature>
<feature type="binding site" evidence="1">
    <location>
        <position position="23"/>
    </location>
    <ligand>
        <name>ATP</name>
        <dbReference type="ChEBI" id="CHEBI:30616"/>
    </ligand>
</feature>
<feature type="binding site" evidence="1">
    <location>
        <position position="24"/>
    </location>
    <ligand>
        <name>ATP</name>
        <dbReference type="ChEBI" id="CHEBI:30616"/>
    </ligand>
</feature>
<feature type="binding site" evidence="1">
    <location>
        <position position="65"/>
    </location>
    <ligand>
        <name>ATP</name>
        <dbReference type="ChEBI" id="CHEBI:30616"/>
    </ligand>
</feature>
<feature type="binding site" evidence="1">
    <location>
        <position position="68"/>
    </location>
    <ligand>
        <name>ATP</name>
        <dbReference type="ChEBI" id="CHEBI:30616"/>
    </ligand>
</feature>
<feature type="binding site" evidence="1">
    <location>
        <position position="69"/>
    </location>
    <ligand>
        <name>ATP</name>
        <dbReference type="ChEBI" id="CHEBI:30616"/>
    </ligand>
</feature>
<feature type="binding site" evidence="1">
    <location>
        <position position="69"/>
    </location>
    <ligand>
        <name>Mg(2+)</name>
        <dbReference type="ChEBI" id="CHEBI:18420"/>
    </ligand>
</feature>
<feature type="binding site" evidence="1">
    <location>
        <position position="70"/>
    </location>
    <ligand>
        <name>ATP</name>
        <dbReference type="ChEBI" id="CHEBI:30616"/>
    </ligand>
</feature>
<feature type="binding site" evidence="1">
    <location>
        <begin position="131"/>
        <end position="133"/>
    </location>
    <ligand>
        <name>ATP</name>
        <dbReference type="ChEBI" id="CHEBI:30616"/>
    </ligand>
</feature>
<feature type="binding site" evidence="1">
    <location>
        <position position="174"/>
    </location>
    <ligand>
        <name>ATP</name>
        <dbReference type="ChEBI" id="CHEBI:30616"/>
    </ligand>
</feature>
<feature type="binding site" evidence="1">
    <location>
        <position position="184"/>
    </location>
    <ligand>
        <name>ATP</name>
        <dbReference type="ChEBI" id="CHEBI:30616"/>
    </ligand>
</feature>
<feature type="binding site" evidence="1">
    <location>
        <position position="221"/>
    </location>
    <ligand>
        <name>ATP</name>
        <dbReference type="ChEBI" id="CHEBI:30616"/>
    </ligand>
</feature>
<feature type="binding site" evidence="1">
    <location>
        <position position="294"/>
    </location>
    <ligand>
        <name>DNA</name>
        <dbReference type="ChEBI" id="CHEBI:16991"/>
    </ligand>
</feature>
<feature type="binding site" evidence="1">
    <location>
        <position position="313"/>
    </location>
    <ligand>
        <name>DNA</name>
        <dbReference type="ChEBI" id="CHEBI:16991"/>
    </ligand>
</feature>
<feature type="binding site" evidence="1">
    <location>
        <position position="318"/>
    </location>
    <ligand>
        <name>DNA</name>
        <dbReference type="ChEBI" id="CHEBI:16991"/>
    </ligand>
</feature>
<organism>
    <name type="scientific">Shigella boydii serotype 4 (strain Sb227)</name>
    <dbReference type="NCBI Taxonomy" id="300268"/>
    <lineage>
        <taxon>Bacteria</taxon>
        <taxon>Pseudomonadati</taxon>
        <taxon>Pseudomonadota</taxon>
        <taxon>Gammaproteobacteria</taxon>
        <taxon>Enterobacterales</taxon>
        <taxon>Enterobacteriaceae</taxon>
        <taxon>Shigella</taxon>
    </lineage>
</organism>
<name>RUVB_SHIBS</name>
<keyword id="KW-0067">ATP-binding</keyword>
<keyword id="KW-0963">Cytoplasm</keyword>
<keyword id="KW-0227">DNA damage</keyword>
<keyword id="KW-0233">DNA recombination</keyword>
<keyword id="KW-0234">DNA repair</keyword>
<keyword id="KW-0238">DNA-binding</keyword>
<keyword id="KW-0378">Hydrolase</keyword>
<keyword id="KW-0547">Nucleotide-binding</keyword>
<comment type="function">
    <text evidence="1">The RuvA-RuvB-RuvC complex processes Holliday junction (HJ) DNA during genetic recombination and DNA repair, while the RuvA-RuvB complex plays an important role in the rescue of blocked DNA replication forks via replication fork reversal (RFR). RuvA specifically binds to HJ cruciform DNA, conferring on it an open structure. The RuvB hexamer acts as an ATP-dependent pump, pulling dsDNA into and through the RuvAB complex. RuvB forms 2 homohexamers on either side of HJ DNA bound by 1 or 2 RuvA tetramers; 4 subunits per hexamer contact DNA at a time. Coordinated motions by a converter formed by DNA-disengaged RuvB subunits stimulates ATP hydrolysis and nucleotide exchange. Immobilization of the converter enables RuvB to convert the ATP-contained energy into a lever motion, pulling 2 nucleotides of DNA out of the RuvA tetramer per ATP hydrolyzed, thus driving DNA branch migration. The RuvB motors rotate together with the DNA substrate, which together with the progressing nucleotide cycle form the mechanistic basis for DNA recombination by continuous HJ branch migration. Branch migration allows RuvC to scan DNA until it finds its consensus sequence, where it cleaves and resolves cruciform DNA.</text>
</comment>
<comment type="catalytic activity">
    <reaction evidence="1">
        <text>ATP + H2O = ADP + phosphate + H(+)</text>
        <dbReference type="Rhea" id="RHEA:13065"/>
        <dbReference type="ChEBI" id="CHEBI:15377"/>
        <dbReference type="ChEBI" id="CHEBI:15378"/>
        <dbReference type="ChEBI" id="CHEBI:30616"/>
        <dbReference type="ChEBI" id="CHEBI:43474"/>
        <dbReference type="ChEBI" id="CHEBI:456216"/>
    </reaction>
</comment>
<comment type="subunit">
    <text evidence="1">Homohexamer. Forms an RuvA(8)-RuvB(12)-Holliday junction (HJ) complex. HJ DNA is sandwiched between 2 RuvA tetramers; dsDNA enters through RuvA and exits via RuvB. An RuvB hexamer assembles on each DNA strand where it exits the tetramer. Each RuvB hexamer is contacted by two RuvA subunits (via domain III) on 2 adjacent RuvB subunits; this complex drives branch migration. In the full resolvosome a probable DNA-RuvA(4)-RuvB(12)-RuvC(2) complex forms which resolves the HJ.</text>
</comment>
<comment type="subcellular location">
    <subcellularLocation>
        <location evidence="1">Cytoplasm</location>
    </subcellularLocation>
</comment>
<comment type="domain">
    <text evidence="1">Has 3 domains, the large (RuvB-L) and small ATPase (RuvB-S) domains and the C-terminal head (RuvB-H) domain. The head domain binds DNA, while the ATPase domains jointly bind ATP, ADP or are empty depending on the state of the subunit in the translocation cycle. During a single DNA translocation step the structure of each domain remains the same, but their relative positions change.</text>
</comment>
<comment type="similarity">
    <text evidence="1">Belongs to the RuvB family.</text>
</comment>
<accession>Q322E6</accession>